<organism>
    <name type="scientific">Homo sapiens</name>
    <name type="common">Human</name>
    <dbReference type="NCBI Taxonomy" id="9606"/>
    <lineage>
        <taxon>Eukaryota</taxon>
        <taxon>Metazoa</taxon>
        <taxon>Chordata</taxon>
        <taxon>Craniata</taxon>
        <taxon>Vertebrata</taxon>
        <taxon>Euteleostomi</taxon>
        <taxon>Mammalia</taxon>
        <taxon>Eutheria</taxon>
        <taxon>Euarchontoglires</taxon>
        <taxon>Primates</taxon>
        <taxon>Haplorrhini</taxon>
        <taxon>Catarrhini</taxon>
        <taxon>Hominidae</taxon>
        <taxon>Homo</taxon>
    </lineage>
</organism>
<keyword id="KW-1003">Cell membrane</keyword>
<keyword id="KW-0297">G-protein coupled receptor</keyword>
<keyword id="KW-0325">Glycoprotein</keyword>
<keyword id="KW-0472">Membrane</keyword>
<keyword id="KW-0552">Olfaction</keyword>
<keyword id="KW-0675">Receptor</keyword>
<keyword id="KW-1185">Reference proteome</keyword>
<keyword id="KW-0716">Sensory transduction</keyword>
<keyword id="KW-0807">Transducer</keyword>
<keyword id="KW-0812">Transmembrane</keyword>
<keyword id="KW-1133">Transmembrane helix</keyword>
<sequence length="310" mass="34742">MGDNITSITEFLLLGFPVGPRIQMLLFGLFSLFYVFTLLGNGTILGLISLDSRLHAPMYFFLSHLAVVDIAYACNTVPRMLVNLLHPAKPISFAGRMMQTFLFSTFAVTECLLLVVMSYDLYVAICHPLRYLAIMTWRVCITLAVTSWTTGVLLSLIHLVLLLPLPFCRPQKIYHFFCEILAVLKLACADTHINENMVLAGAISGLVGPLSTIVVSYMCILCAILQIQSREVQRKAFCTCFSHLCVIGLFYGTAIIMYVGPRYGNPKEQKKYLLLFHSLFNPMLNPLICSLRNSEVKNTLKRVLGVERAL</sequence>
<evidence type="ECO:0000255" key="1"/>
<evidence type="ECO:0000255" key="2">
    <source>
        <dbReference type="PROSITE-ProRule" id="PRU00521"/>
    </source>
</evidence>
<evidence type="ECO:0000305" key="3"/>
<name>OR2A7_HUMAN</name>
<proteinExistence type="evidence at transcript level"/>
<dbReference type="EMBL" id="AC004889">
    <property type="status" value="NOT_ANNOTATED_CDS"/>
    <property type="molecule type" value="Genomic_DNA"/>
</dbReference>
<dbReference type="EMBL" id="CH471051">
    <property type="protein sequence ID" value="EAW48048.1"/>
    <property type="molecule type" value="Genomic_DNA"/>
</dbReference>
<dbReference type="EMBL" id="BC136704">
    <property type="protein sequence ID" value="AAI36705.1"/>
    <property type="molecule type" value="mRNA"/>
</dbReference>
<dbReference type="EMBL" id="BC136711">
    <property type="protein sequence ID" value="AAI36712.1"/>
    <property type="molecule type" value="mRNA"/>
</dbReference>
<dbReference type="EMBL" id="AF399598">
    <property type="protein sequence ID" value="AAK95083.1"/>
    <property type="molecule type" value="Genomic_DNA"/>
</dbReference>
<dbReference type="EMBL" id="BK004218">
    <property type="protein sequence ID" value="DAA04616.1"/>
    <property type="molecule type" value="Genomic_DNA"/>
</dbReference>
<dbReference type="CCDS" id="CCDS55177.1"/>
<dbReference type="RefSeq" id="NP_001005328.1">
    <property type="nucleotide sequence ID" value="NM_001005328.2"/>
</dbReference>
<dbReference type="RefSeq" id="XP_016885947.1">
    <property type="nucleotide sequence ID" value="XM_017030458.1"/>
</dbReference>
<dbReference type="SMR" id="Q96R45"/>
<dbReference type="FunCoup" id="Q96R45">
    <property type="interactions" value="448"/>
</dbReference>
<dbReference type="STRING" id="9606.ENSP00000493320"/>
<dbReference type="GlyCosmos" id="Q96R45">
    <property type="glycosylation" value="1 site, No reported glycans"/>
</dbReference>
<dbReference type="GlyGen" id="Q96R45">
    <property type="glycosylation" value="1 site"/>
</dbReference>
<dbReference type="iPTMnet" id="Q96R45"/>
<dbReference type="PhosphoSitePlus" id="Q96R45"/>
<dbReference type="BioMuta" id="OR2A7"/>
<dbReference type="DMDM" id="152031651"/>
<dbReference type="MassIVE" id="Q96R45"/>
<dbReference type="PaxDb" id="9606-ENSP00000420502"/>
<dbReference type="PeptideAtlas" id="Q96R45"/>
<dbReference type="Antibodypedia" id="56196">
    <property type="antibodies" value="33 antibodies from 14 providers"/>
</dbReference>
<dbReference type="DNASU" id="401427"/>
<dbReference type="Ensembl" id="ENST00000493325.1">
    <property type="protein sequence ID" value="ENSP00000420502.1"/>
    <property type="gene ID" value="ENSG00000243896.4"/>
</dbReference>
<dbReference type="Ensembl" id="ENST00000641841.1">
    <property type="protein sequence ID" value="ENSP00000493320.1"/>
    <property type="gene ID" value="ENSG00000243896.4"/>
</dbReference>
<dbReference type="Ensembl" id="ENST00000643586.2">
    <property type="protein sequence ID" value="ENSP00000493694.1"/>
    <property type="gene ID" value="ENSG00000284749.2"/>
</dbReference>
<dbReference type="Ensembl" id="ENST00000643902.2">
    <property type="protein sequence ID" value="ENSP00000493470.1"/>
    <property type="gene ID" value="ENSG00000284749.2"/>
</dbReference>
<dbReference type="GeneID" id="401427"/>
<dbReference type="KEGG" id="hsa:401427"/>
<dbReference type="MANE-Select" id="ENST00000641841.1">
    <property type="protein sequence ID" value="ENSP00000493320.1"/>
    <property type="RefSeq nucleotide sequence ID" value="NM_001005328.2"/>
    <property type="RefSeq protein sequence ID" value="NP_001005328.1"/>
</dbReference>
<dbReference type="UCSC" id="uc011kuc.3">
    <property type="organism name" value="human"/>
</dbReference>
<dbReference type="AGR" id="HGNC:8234"/>
<dbReference type="CTD" id="401427"/>
<dbReference type="GeneCards" id="OR2A7"/>
<dbReference type="HGNC" id="HGNC:8234">
    <property type="gene designation" value="OR2A7"/>
</dbReference>
<dbReference type="HPA" id="ENSG00000243896">
    <property type="expression patterns" value="Low tissue specificity"/>
</dbReference>
<dbReference type="neXtProt" id="NX_Q96R45"/>
<dbReference type="PharmGKB" id="PA32120"/>
<dbReference type="VEuPathDB" id="HostDB:ENSG00000243896"/>
<dbReference type="eggNOG" id="ENOG502SM15">
    <property type="taxonomic scope" value="Eukaryota"/>
</dbReference>
<dbReference type="GeneTree" id="ENSGT00940000161677"/>
<dbReference type="HOGENOM" id="CLU_012526_1_2_1"/>
<dbReference type="InParanoid" id="Q96R45"/>
<dbReference type="OMA" id="VISYMCI"/>
<dbReference type="OrthoDB" id="6147321at2759"/>
<dbReference type="PAN-GO" id="Q96R45">
    <property type="GO annotations" value="4 GO annotations based on evolutionary models"/>
</dbReference>
<dbReference type="PhylomeDB" id="Q96R45"/>
<dbReference type="TreeFam" id="TF337251"/>
<dbReference type="PathwayCommons" id="Q96R45"/>
<dbReference type="Reactome" id="R-HSA-381753">
    <property type="pathway name" value="Olfactory Signaling Pathway"/>
</dbReference>
<dbReference type="Reactome" id="R-HSA-9752946">
    <property type="pathway name" value="Expression and translocation of olfactory receptors"/>
</dbReference>
<dbReference type="BioGRID-ORCS" id="401427">
    <property type="hits" value="4 hits in 619 CRISPR screens"/>
</dbReference>
<dbReference type="Pharos" id="Q96R45">
    <property type="development level" value="Tdark"/>
</dbReference>
<dbReference type="PRO" id="PR:Q96R45"/>
<dbReference type="Proteomes" id="UP000005640">
    <property type="component" value="Chromosome 7"/>
</dbReference>
<dbReference type="RNAct" id="Q96R45">
    <property type="molecule type" value="protein"/>
</dbReference>
<dbReference type="Bgee" id="ENSG00000243896">
    <property type="expression patterns" value="Expressed in male germ line stem cell (sensu Vertebrata) in testis and 89 other cell types or tissues"/>
</dbReference>
<dbReference type="ExpressionAtlas" id="Q96R45">
    <property type="expression patterns" value="baseline and differential"/>
</dbReference>
<dbReference type="GO" id="GO:0016020">
    <property type="term" value="C:membrane"/>
    <property type="evidence" value="ECO:0000318"/>
    <property type="project" value="GO_Central"/>
</dbReference>
<dbReference type="GO" id="GO:0005886">
    <property type="term" value="C:plasma membrane"/>
    <property type="evidence" value="ECO:0000304"/>
    <property type="project" value="Reactome"/>
</dbReference>
<dbReference type="GO" id="GO:0004930">
    <property type="term" value="F:G protein-coupled receptor activity"/>
    <property type="evidence" value="ECO:0007669"/>
    <property type="project" value="UniProtKB-KW"/>
</dbReference>
<dbReference type="GO" id="GO:0005549">
    <property type="term" value="F:odorant binding"/>
    <property type="evidence" value="ECO:0000318"/>
    <property type="project" value="GO_Central"/>
</dbReference>
<dbReference type="GO" id="GO:0004984">
    <property type="term" value="F:olfactory receptor activity"/>
    <property type="evidence" value="ECO:0000318"/>
    <property type="project" value="GO_Central"/>
</dbReference>
<dbReference type="GO" id="GO:0050911">
    <property type="term" value="P:detection of chemical stimulus involved in sensory perception of smell"/>
    <property type="evidence" value="ECO:0000318"/>
    <property type="project" value="GO_Central"/>
</dbReference>
<dbReference type="FunFam" id="1.20.1070.10:FF:000008">
    <property type="entry name" value="Olfactory receptor"/>
    <property type="match status" value="1"/>
</dbReference>
<dbReference type="Gene3D" id="1.20.1070.10">
    <property type="entry name" value="Rhodopsin 7-helix transmembrane proteins"/>
    <property type="match status" value="1"/>
</dbReference>
<dbReference type="InterPro" id="IPR000276">
    <property type="entry name" value="GPCR_Rhodpsn"/>
</dbReference>
<dbReference type="InterPro" id="IPR017452">
    <property type="entry name" value="GPCR_Rhodpsn_7TM"/>
</dbReference>
<dbReference type="InterPro" id="IPR000725">
    <property type="entry name" value="Olfact_rcpt"/>
</dbReference>
<dbReference type="PANTHER" id="PTHR26453">
    <property type="entry name" value="OLFACTORY RECEPTOR"/>
    <property type="match status" value="1"/>
</dbReference>
<dbReference type="Pfam" id="PF13853">
    <property type="entry name" value="7tm_4"/>
    <property type="match status" value="1"/>
</dbReference>
<dbReference type="PRINTS" id="PR00237">
    <property type="entry name" value="GPCRRHODOPSN"/>
</dbReference>
<dbReference type="PRINTS" id="PR00245">
    <property type="entry name" value="OLFACTORYR"/>
</dbReference>
<dbReference type="SUPFAM" id="SSF81321">
    <property type="entry name" value="Family A G protein-coupled receptor-like"/>
    <property type="match status" value="1"/>
</dbReference>
<dbReference type="PROSITE" id="PS50262">
    <property type="entry name" value="G_PROTEIN_RECEP_F1_2"/>
    <property type="match status" value="1"/>
</dbReference>
<reference key="1">
    <citation type="journal article" date="2003" name="Nature">
        <title>The DNA sequence of human chromosome 7.</title>
        <authorList>
            <person name="Hillier L.W."/>
            <person name="Fulton R.S."/>
            <person name="Fulton L.A."/>
            <person name="Graves T.A."/>
            <person name="Pepin K.H."/>
            <person name="Wagner-McPherson C."/>
            <person name="Layman D."/>
            <person name="Maas J."/>
            <person name="Jaeger S."/>
            <person name="Walker R."/>
            <person name="Wylie K."/>
            <person name="Sekhon M."/>
            <person name="Becker M.C."/>
            <person name="O'Laughlin M.D."/>
            <person name="Schaller M.E."/>
            <person name="Fewell G.A."/>
            <person name="Delehaunty K.D."/>
            <person name="Miner T.L."/>
            <person name="Nash W.E."/>
            <person name="Cordes M."/>
            <person name="Du H."/>
            <person name="Sun H."/>
            <person name="Edwards J."/>
            <person name="Bradshaw-Cordum H."/>
            <person name="Ali J."/>
            <person name="Andrews S."/>
            <person name="Isak A."/>
            <person name="Vanbrunt A."/>
            <person name="Nguyen C."/>
            <person name="Du F."/>
            <person name="Lamar B."/>
            <person name="Courtney L."/>
            <person name="Kalicki J."/>
            <person name="Ozersky P."/>
            <person name="Bielicki L."/>
            <person name="Scott K."/>
            <person name="Holmes A."/>
            <person name="Harkins R."/>
            <person name="Harris A."/>
            <person name="Strong C.M."/>
            <person name="Hou S."/>
            <person name="Tomlinson C."/>
            <person name="Dauphin-Kohlberg S."/>
            <person name="Kozlowicz-Reilly A."/>
            <person name="Leonard S."/>
            <person name="Rohlfing T."/>
            <person name="Rock S.M."/>
            <person name="Tin-Wollam A.-M."/>
            <person name="Abbott A."/>
            <person name="Minx P."/>
            <person name="Maupin R."/>
            <person name="Strowmatt C."/>
            <person name="Latreille P."/>
            <person name="Miller N."/>
            <person name="Johnson D."/>
            <person name="Murray J."/>
            <person name="Woessner J.P."/>
            <person name="Wendl M.C."/>
            <person name="Yang S.-P."/>
            <person name="Schultz B.R."/>
            <person name="Wallis J.W."/>
            <person name="Spieth J."/>
            <person name="Bieri T.A."/>
            <person name="Nelson J.O."/>
            <person name="Berkowicz N."/>
            <person name="Wohldmann P.E."/>
            <person name="Cook L.L."/>
            <person name="Hickenbotham M.T."/>
            <person name="Eldred J."/>
            <person name="Williams D."/>
            <person name="Bedell J.A."/>
            <person name="Mardis E.R."/>
            <person name="Clifton S.W."/>
            <person name="Chissoe S.L."/>
            <person name="Marra M.A."/>
            <person name="Raymond C."/>
            <person name="Haugen E."/>
            <person name="Gillett W."/>
            <person name="Zhou Y."/>
            <person name="James R."/>
            <person name="Phelps K."/>
            <person name="Iadanoto S."/>
            <person name="Bubb K."/>
            <person name="Simms E."/>
            <person name="Levy R."/>
            <person name="Clendenning J."/>
            <person name="Kaul R."/>
            <person name="Kent W.J."/>
            <person name="Furey T.S."/>
            <person name="Baertsch R.A."/>
            <person name="Brent M.R."/>
            <person name="Keibler E."/>
            <person name="Flicek P."/>
            <person name="Bork P."/>
            <person name="Suyama M."/>
            <person name="Bailey J.A."/>
            <person name="Portnoy M.E."/>
            <person name="Torrents D."/>
            <person name="Chinwalla A.T."/>
            <person name="Gish W.R."/>
            <person name="Eddy S.R."/>
            <person name="McPherson J.D."/>
            <person name="Olson M.V."/>
            <person name="Eichler E.E."/>
            <person name="Green E.D."/>
            <person name="Waterston R.H."/>
            <person name="Wilson R.K."/>
        </authorList>
    </citation>
    <scope>NUCLEOTIDE SEQUENCE [LARGE SCALE GENOMIC DNA]</scope>
</reference>
<reference key="2">
    <citation type="submission" date="2005-09" db="EMBL/GenBank/DDBJ databases">
        <authorList>
            <person name="Mural R.J."/>
            <person name="Istrail S."/>
            <person name="Sutton G.G."/>
            <person name="Florea L."/>
            <person name="Halpern A.L."/>
            <person name="Mobarry C.M."/>
            <person name="Lippert R."/>
            <person name="Walenz B."/>
            <person name="Shatkay H."/>
            <person name="Dew I."/>
            <person name="Miller J.R."/>
            <person name="Flanigan M.J."/>
            <person name="Edwards N.J."/>
            <person name="Bolanos R."/>
            <person name="Fasulo D."/>
            <person name="Halldorsson B.V."/>
            <person name="Hannenhalli S."/>
            <person name="Turner R."/>
            <person name="Yooseph S."/>
            <person name="Lu F."/>
            <person name="Nusskern D.R."/>
            <person name="Shue B.C."/>
            <person name="Zheng X.H."/>
            <person name="Zhong F."/>
            <person name="Delcher A.L."/>
            <person name="Huson D.H."/>
            <person name="Kravitz S.A."/>
            <person name="Mouchard L."/>
            <person name="Reinert K."/>
            <person name="Remington K.A."/>
            <person name="Clark A.G."/>
            <person name="Waterman M.S."/>
            <person name="Eichler E.E."/>
            <person name="Adams M.D."/>
            <person name="Hunkapiller M.W."/>
            <person name="Myers E.W."/>
            <person name="Venter J.C."/>
        </authorList>
    </citation>
    <scope>NUCLEOTIDE SEQUENCE [LARGE SCALE GENOMIC DNA]</scope>
</reference>
<reference key="3">
    <citation type="journal article" date="2004" name="Genome Res.">
        <title>The status, quality, and expansion of the NIH full-length cDNA project: the Mammalian Gene Collection (MGC).</title>
        <authorList>
            <consortium name="The MGC Project Team"/>
        </authorList>
    </citation>
    <scope>NUCLEOTIDE SEQUENCE [LARGE SCALE MRNA]</scope>
    <source>
        <tissue>Brain</tissue>
    </source>
</reference>
<reference key="4">
    <citation type="journal article" date="2002" name="Genomics">
        <title>DEFOG: a practical scheme for deciphering families of genes.</title>
        <authorList>
            <person name="Fuchs T."/>
            <person name="Malecova B."/>
            <person name="Linhart C."/>
            <person name="Sharan R."/>
            <person name="Khen M."/>
            <person name="Herwig R."/>
            <person name="Shmulevich D."/>
            <person name="Elkon R."/>
            <person name="Steinfath M."/>
            <person name="O'Brien J.K."/>
            <person name="Radelof U."/>
            <person name="Lehrach H."/>
            <person name="Lancet D."/>
            <person name="Shamir R."/>
        </authorList>
    </citation>
    <scope>NUCLEOTIDE SEQUENCE [GENOMIC DNA] OF 67-282</scope>
</reference>
<reference key="5">
    <citation type="journal article" date="2004" name="Proc. Natl. Acad. Sci. U.S.A.">
        <title>The human olfactory receptor gene family.</title>
        <authorList>
            <person name="Malnic B."/>
            <person name="Godfrey P.A."/>
            <person name="Buck L.B."/>
        </authorList>
    </citation>
    <scope>IDENTIFICATION</scope>
</reference>
<reference key="6">
    <citation type="journal article" date="2004" name="Proc. Natl. Acad. Sci. U.S.A.">
        <authorList>
            <person name="Malnic B."/>
            <person name="Godfrey P.A."/>
            <person name="Buck L.B."/>
        </authorList>
    </citation>
    <scope>ERRATUM OF PUBMED:14983052</scope>
</reference>
<protein>
    <recommendedName>
        <fullName>Olfactory receptor 2A7</fullName>
    </recommendedName>
    <alternativeName>
        <fullName>Olfactory receptor OR7-18</fullName>
    </alternativeName>
</protein>
<gene>
    <name type="primary">OR2A7</name>
</gene>
<feature type="chain" id="PRO_0000150456" description="Olfactory receptor 2A7">
    <location>
        <begin position="1"/>
        <end position="310"/>
    </location>
</feature>
<feature type="topological domain" description="Extracellular" evidence="1">
    <location>
        <begin position="1"/>
        <end position="24"/>
    </location>
</feature>
<feature type="transmembrane region" description="Helical; Name=1" evidence="1">
    <location>
        <begin position="25"/>
        <end position="48"/>
    </location>
</feature>
<feature type="topological domain" description="Cytoplasmic" evidence="1">
    <location>
        <begin position="49"/>
        <end position="56"/>
    </location>
</feature>
<feature type="transmembrane region" description="Helical; Name=2" evidence="1">
    <location>
        <begin position="57"/>
        <end position="78"/>
    </location>
</feature>
<feature type="topological domain" description="Extracellular" evidence="1">
    <location>
        <begin position="79"/>
        <end position="99"/>
    </location>
</feature>
<feature type="transmembrane region" description="Helical; Name=3" evidence="1">
    <location>
        <begin position="100"/>
        <end position="119"/>
    </location>
</feature>
<feature type="topological domain" description="Cytoplasmic" evidence="1">
    <location>
        <begin position="120"/>
        <end position="138"/>
    </location>
</feature>
<feature type="transmembrane region" description="Helical; Name=4" evidence="1">
    <location>
        <begin position="139"/>
        <end position="157"/>
    </location>
</feature>
<feature type="topological domain" description="Extracellular" evidence="1">
    <location>
        <begin position="158"/>
        <end position="194"/>
    </location>
</feature>
<feature type="transmembrane region" description="Helical; Name=5" evidence="1">
    <location>
        <begin position="195"/>
        <end position="218"/>
    </location>
</feature>
<feature type="topological domain" description="Cytoplasmic" evidence="1">
    <location>
        <begin position="219"/>
        <end position="235"/>
    </location>
</feature>
<feature type="transmembrane region" description="Helical; Name=6" evidence="1">
    <location>
        <begin position="236"/>
        <end position="258"/>
    </location>
</feature>
<feature type="topological domain" description="Extracellular" evidence="1">
    <location>
        <begin position="259"/>
        <end position="271"/>
    </location>
</feature>
<feature type="transmembrane region" description="Helical; Name=7" evidence="1">
    <location>
        <begin position="272"/>
        <end position="291"/>
    </location>
</feature>
<feature type="topological domain" description="Cytoplasmic" evidence="1">
    <location>
        <begin position="292"/>
        <end position="310"/>
    </location>
</feature>
<feature type="glycosylation site" description="N-linked (GlcNAc...) asparagine" evidence="1">
    <location>
        <position position="4"/>
    </location>
</feature>
<feature type="sequence conflict" description="In Ref. 4; AAK95083." evidence="3" ref="4">
    <original>L</original>
    <variation>P</variation>
    <location>
        <position position="274"/>
    </location>
</feature>
<accession>Q96R45</accession>
<accession>B2RN57</accession>
<accession>Q6IFP4</accession>
<comment type="function">
    <text evidence="3">Odorant receptor.</text>
</comment>
<comment type="subcellular location">
    <subcellularLocation>
        <location>Cell membrane</location>
        <topology>Multi-pass membrane protein</topology>
    </subcellularLocation>
</comment>
<comment type="similarity">
    <text evidence="2">Belongs to the G-protein coupled receptor 1 family.</text>
</comment>
<comment type="online information" name="Human Olfactory Receptor Data Exploratorium (HORDE)">
    <link uri="http://genome.weizmann.ac.il/horde/card/index/symbol:OR2A7"/>
</comment>